<feature type="chain" id="PRO_0000157223" description="Protein-export membrane protein SecG">
    <location>
        <begin position="1"/>
        <end position="108"/>
    </location>
</feature>
<feature type="transmembrane region" description="Helical" evidence="2">
    <location>
        <begin position="2"/>
        <end position="22"/>
    </location>
</feature>
<feature type="transmembrane region" description="Helical" evidence="2">
    <location>
        <begin position="51"/>
        <end position="71"/>
    </location>
</feature>
<evidence type="ECO:0000250" key="1"/>
<evidence type="ECO:0000255" key="2"/>
<evidence type="ECO:0000305" key="3"/>
<comment type="function">
    <text evidence="1">Involved in protein export. Participates in an early event of protein translocation (By similarity).</text>
</comment>
<comment type="subunit">
    <text evidence="1">Part of the prokaryotic protein translocation apparatus which comprise SecA, SecB, SecE, SecF, SecG and SecY.</text>
</comment>
<comment type="subcellular location">
    <subcellularLocation>
        <location evidence="1">Cell membrane</location>
        <topology evidence="1">Multi-pass membrane protein</topology>
    </subcellularLocation>
</comment>
<comment type="similarity">
    <text evidence="3">Belongs to the SecG family.</text>
</comment>
<organism>
    <name type="scientific">Buchnera aphidicola subsp. Schizaphis graminum (strain Sg)</name>
    <dbReference type="NCBI Taxonomy" id="198804"/>
    <lineage>
        <taxon>Bacteria</taxon>
        <taxon>Pseudomonadati</taxon>
        <taxon>Pseudomonadota</taxon>
        <taxon>Gammaproteobacteria</taxon>
        <taxon>Enterobacterales</taxon>
        <taxon>Erwiniaceae</taxon>
        <taxon>Buchnera</taxon>
    </lineage>
</organism>
<sequence>MYLFFLIFLIFISFSLIFLILLQSGKGFNNTIHLNTSNNFNFFNSVGSGGFIKNIIGFFAGFFLIFSIILCNINDKKVNSDVFLEKNTQKKTINEKKEQKILNSELPL</sequence>
<reference key="1">
    <citation type="journal article" date="2002" name="Science">
        <title>50 million years of genomic stasis in endosymbiotic bacteria.</title>
        <authorList>
            <person name="Tamas I."/>
            <person name="Klasson L."/>
            <person name="Canbaeck B."/>
            <person name="Naeslund A.K."/>
            <person name="Eriksson A.-S."/>
            <person name="Wernegreen J.J."/>
            <person name="Sandstroem J.P."/>
            <person name="Moran N.A."/>
            <person name="Andersson S.G.E."/>
        </authorList>
    </citation>
    <scope>NUCLEOTIDE SEQUENCE [LARGE SCALE GENOMIC DNA]</scope>
    <source>
        <strain>Sg</strain>
    </source>
</reference>
<dbReference type="EMBL" id="AE013218">
    <property type="protein sequence ID" value="AAM67920.1"/>
    <property type="molecule type" value="Genomic_DNA"/>
</dbReference>
<dbReference type="RefSeq" id="WP_011053887.1">
    <property type="nucleotide sequence ID" value="NC_004061.1"/>
</dbReference>
<dbReference type="SMR" id="Q8K9G9"/>
<dbReference type="STRING" id="198804.BUsg_367"/>
<dbReference type="GeneID" id="93003837"/>
<dbReference type="KEGG" id="bas:BUsg_367"/>
<dbReference type="eggNOG" id="COG1314">
    <property type="taxonomic scope" value="Bacteria"/>
</dbReference>
<dbReference type="HOGENOM" id="CLU_094156_2_2_6"/>
<dbReference type="Proteomes" id="UP000000416">
    <property type="component" value="Chromosome"/>
</dbReference>
<dbReference type="GO" id="GO:0005886">
    <property type="term" value="C:plasma membrane"/>
    <property type="evidence" value="ECO:0007669"/>
    <property type="project" value="UniProtKB-SubCell"/>
</dbReference>
<dbReference type="GO" id="GO:0015450">
    <property type="term" value="F:protein-transporting ATPase activity"/>
    <property type="evidence" value="ECO:0007669"/>
    <property type="project" value="InterPro"/>
</dbReference>
<dbReference type="GO" id="GO:0065002">
    <property type="term" value="P:intracellular protein transmembrane transport"/>
    <property type="evidence" value="ECO:0007669"/>
    <property type="project" value="TreeGrafter"/>
</dbReference>
<dbReference type="GO" id="GO:0009306">
    <property type="term" value="P:protein secretion"/>
    <property type="evidence" value="ECO:0007669"/>
    <property type="project" value="InterPro"/>
</dbReference>
<dbReference type="GO" id="GO:0043952">
    <property type="term" value="P:protein transport by the Sec complex"/>
    <property type="evidence" value="ECO:0007669"/>
    <property type="project" value="TreeGrafter"/>
</dbReference>
<dbReference type="InterPro" id="IPR004692">
    <property type="entry name" value="SecG"/>
</dbReference>
<dbReference type="NCBIfam" id="TIGR00810">
    <property type="entry name" value="secG"/>
    <property type="match status" value="1"/>
</dbReference>
<dbReference type="PANTHER" id="PTHR34182">
    <property type="entry name" value="PROTEIN-EXPORT MEMBRANE PROTEIN SECG"/>
    <property type="match status" value="1"/>
</dbReference>
<dbReference type="PANTHER" id="PTHR34182:SF1">
    <property type="entry name" value="PROTEIN-EXPORT MEMBRANE PROTEIN SECG"/>
    <property type="match status" value="1"/>
</dbReference>
<dbReference type="Pfam" id="PF03840">
    <property type="entry name" value="SecG"/>
    <property type="match status" value="1"/>
</dbReference>
<dbReference type="PRINTS" id="PR01651">
    <property type="entry name" value="SECGEXPORT"/>
</dbReference>
<gene>
    <name type="primary">secG</name>
    <name type="ordered locus">BUsg_367</name>
</gene>
<keyword id="KW-1003">Cell membrane</keyword>
<keyword id="KW-0472">Membrane</keyword>
<keyword id="KW-0653">Protein transport</keyword>
<keyword id="KW-0811">Translocation</keyword>
<keyword id="KW-0812">Transmembrane</keyword>
<keyword id="KW-1133">Transmembrane helix</keyword>
<keyword id="KW-0813">Transport</keyword>
<accession>Q8K9G9</accession>
<name>SECG_BUCAP</name>
<proteinExistence type="inferred from homology"/>
<protein>
    <recommendedName>
        <fullName>Protein-export membrane protein SecG</fullName>
    </recommendedName>
</protein>